<name>SLYX_ECO8A</name>
<sequence>MQDLSLEARLAELESRLAFQEITIEELNVTVTAHEMEMAKLRDHLRLLTEKLKASQPSNIASQAEETPPPHY</sequence>
<evidence type="ECO:0000255" key="1">
    <source>
        <dbReference type="HAMAP-Rule" id="MF_00715"/>
    </source>
</evidence>
<evidence type="ECO:0000256" key="2">
    <source>
        <dbReference type="SAM" id="MobiDB-lite"/>
    </source>
</evidence>
<organism>
    <name type="scientific">Escherichia coli O8 (strain IAI1)</name>
    <dbReference type="NCBI Taxonomy" id="585034"/>
    <lineage>
        <taxon>Bacteria</taxon>
        <taxon>Pseudomonadati</taxon>
        <taxon>Pseudomonadota</taxon>
        <taxon>Gammaproteobacteria</taxon>
        <taxon>Enterobacterales</taxon>
        <taxon>Enterobacteriaceae</taxon>
        <taxon>Escherichia</taxon>
    </lineage>
</organism>
<accession>B7M1P9</accession>
<comment type="similarity">
    <text evidence="1">Belongs to the SlyX family.</text>
</comment>
<reference key="1">
    <citation type="journal article" date="2009" name="PLoS Genet.">
        <title>Organised genome dynamics in the Escherichia coli species results in highly diverse adaptive paths.</title>
        <authorList>
            <person name="Touchon M."/>
            <person name="Hoede C."/>
            <person name="Tenaillon O."/>
            <person name="Barbe V."/>
            <person name="Baeriswyl S."/>
            <person name="Bidet P."/>
            <person name="Bingen E."/>
            <person name="Bonacorsi S."/>
            <person name="Bouchier C."/>
            <person name="Bouvet O."/>
            <person name="Calteau A."/>
            <person name="Chiapello H."/>
            <person name="Clermont O."/>
            <person name="Cruveiller S."/>
            <person name="Danchin A."/>
            <person name="Diard M."/>
            <person name="Dossat C."/>
            <person name="Karoui M.E."/>
            <person name="Frapy E."/>
            <person name="Garry L."/>
            <person name="Ghigo J.M."/>
            <person name="Gilles A.M."/>
            <person name="Johnson J."/>
            <person name="Le Bouguenec C."/>
            <person name="Lescat M."/>
            <person name="Mangenot S."/>
            <person name="Martinez-Jehanne V."/>
            <person name="Matic I."/>
            <person name="Nassif X."/>
            <person name="Oztas S."/>
            <person name="Petit M.A."/>
            <person name="Pichon C."/>
            <person name="Rouy Z."/>
            <person name="Ruf C.S."/>
            <person name="Schneider D."/>
            <person name="Tourret J."/>
            <person name="Vacherie B."/>
            <person name="Vallenet D."/>
            <person name="Medigue C."/>
            <person name="Rocha E.P.C."/>
            <person name="Denamur E."/>
        </authorList>
    </citation>
    <scope>NUCLEOTIDE SEQUENCE [LARGE SCALE GENOMIC DNA]</scope>
    <source>
        <strain>IAI1</strain>
    </source>
</reference>
<feature type="chain" id="PRO_1000195839" description="Protein SlyX">
    <location>
        <begin position="1"/>
        <end position="72"/>
    </location>
</feature>
<feature type="region of interest" description="Disordered" evidence="2">
    <location>
        <begin position="52"/>
        <end position="72"/>
    </location>
</feature>
<feature type="compositionally biased region" description="Polar residues" evidence="2">
    <location>
        <begin position="55"/>
        <end position="65"/>
    </location>
</feature>
<protein>
    <recommendedName>
        <fullName evidence="1">Protein SlyX</fullName>
    </recommendedName>
</protein>
<gene>
    <name evidence="1" type="primary">slyX</name>
    <name type="ordered locus">ECIAI1_3484</name>
</gene>
<dbReference type="EMBL" id="CU928160">
    <property type="protein sequence ID" value="CAR00286.1"/>
    <property type="molecule type" value="Genomic_DNA"/>
</dbReference>
<dbReference type="RefSeq" id="WP_001153615.1">
    <property type="nucleotide sequence ID" value="NC_011741.1"/>
</dbReference>
<dbReference type="SMR" id="B7M1P9"/>
<dbReference type="KEGG" id="ecr:ECIAI1_3484"/>
<dbReference type="HOGENOM" id="CLU_180796_4_2_6"/>
<dbReference type="Gene3D" id="1.20.5.300">
    <property type="match status" value="1"/>
</dbReference>
<dbReference type="HAMAP" id="MF_00715">
    <property type="entry name" value="SlyX"/>
    <property type="match status" value="1"/>
</dbReference>
<dbReference type="InterPro" id="IPR007236">
    <property type="entry name" value="SlyX"/>
</dbReference>
<dbReference type="NCBIfam" id="NF002750">
    <property type="entry name" value="PRK02793.1"/>
    <property type="match status" value="1"/>
</dbReference>
<dbReference type="PANTHER" id="PTHR36508">
    <property type="entry name" value="PROTEIN SLYX"/>
    <property type="match status" value="1"/>
</dbReference>
<dbReference type="PANTHER" id="PTHR36508:SF1">
    <property type="entry name" value="PROTEIN SLYX"/>
    <property type="match status" value="1"/>
</dbReference>
<dbReference type="Pfam" id="PF04102">
    <property type="entry name" value="SlyX"/>
    <property type="match status" value="1"/>
</dbReference>
<proteinExistence type="inferred from homology"/>